<organism>
    <name type="scientific">Listeria monocytogenes serotype 4a (strain HCC23)</name>
    <dbReference type="NCBI Taxonomy" id="552536"/>
    <lineage>
        <taxon>Bacteria</taxon>
        <taxon>Bacillati</taxon>
        <taxon>Bacillota</taxon>
        <taxon>Bacilli</taxon>
        <taxon>Bacillales</taxon>
        <taxon>Listeriaceae</taxon>
        <taxon>Listeria</taxon>
    </lineage>
</organism>
<name>PRMA_LISMH</name>
<keyword id="KW-0963">Cytoplasm</keyword>
<keyword id="KW-0489">Methyltransferase</keyword>
<keyword id="KW-0949">S-adenosyl-L-methionine</keyword>
<keyword id="KW-0808">Transferase</keyword>
<feature type="chain" id="PRO_1000192643" description="Ribosomal protein L11 methyltransferase">
    <location>
        <begin position="1"/>
        <end position="314"/>
    </location>
</feature>
<feature type="binding site" evidence="1">
    <location>
        <position position="161"/>
    </location>
    <ligand>
        <name>S-adenosyl-L-methionine</name>
        <dbReference type="ChEBI" id="CHEBI:59789"/>
    </ligand>
</feature>
<feature type="binding site" evidence="1">
    <location>
        <position position="182"/>
    </location>
    <ligand>
        <name>S-adenosyl-L-methionine</name>
        <dbReference type="ChEBI" id="CHEBI:59789"/>
    </ligand>
</feature>
<feature type="binding site" evidence="1">
    <location>
        <position position="204"/>
    </location>
    <ligand>
        <name>S-adenosyl-L-methionine</name>
        <dbReference type="ChEBI" id="CHEBI:59789"/>
    </ligand>
</feature>
<feature type="binding site" evidence="1">
    <location>
        <position position="248"/>
    </location>
    <ligand>
        <name>S-adenosyl-L-methionine</name>
        <dbReference type="ChEBI" id="CHEBI:59789"/>
    </ligand>
</feature>
<proteinExistence type="inferred from homology"/>
<sequence length="314" mass="34808">MEWSEVEVHTTNEAVEPVANVLTEFGAAGVSIEDVADFLREREDKFGEIYALKREDYPEDGVIIKAYFLKTSEFVEQIPEIEQTLKNLTTFDIPLGKFQFVVNDVDDEEWATAWKKYYHPVQITDRITIVPSWESYTPSANEIIIELDPGMAFGTGTHPTTQLCIRALSDYLQPGDEVIDVGTGSGVLSIASAKLGAKSILATDLDEIATRAAEENITLNKTEHIITVKQNNLLQDINKTNVDIVVANILAEVILLFPEDVYRALKPGGIFIASGIIEDKAKVVEEALKNAGLIIEKIEQQGDWVAIISKRGVE</sequence>
<protein>
    <recommendedName>
        <fullName evidence="1">Ribosomal protein L11 methyltransferase</fullName>
        <shortName evidence="1">L11 Mtase</shortName>
        <ecNumber evidence="1">2.1.1.-</ecNumber>
    </recommendedName>
</protein>
<gene>
    <name evidence="1" type="primary">prmA</name>
    <name type="ordered locus">LMHCC_1099</name>
</gene>
<accession>B8DE40</accession>
<evidence type="ECO:0000255" key="1">
    <source>
        <dbReference type="HAMAP-Rule" id="MF_00735"/>
    </source>
</evidence>
<dbReference type="EC" id="2.1.1.-" evidence="1"/>
<dbReference type="EMBL" id="CP001175">
    <property type="protein sequence ID" value="ACK39447.1"/>
    <property type="molecule type" value="Genomic_DNA"/>
</dbReference>
<dbReference type="RefSeq" id="WP_012581307.1">
    <property type="nucleotide sequence ID" value="NC_011660.1"/>
</dbReference>
<dbReference type="SMR" id="B8DE40"/>
<dbReference type="KEGG" id="lmh:LMHCC_1099"/>
<dbReference type="HOGENOM" id="CLU_049382_0_1_9"/>
<dbReference type="GO" id="GO:0005737">
    <property type="term" value="C:cytoplasm"/>
    <property type="evidence" value="ECO:0007669"/>
    <property type="project" value="UniProtKB-SubCell"/>
</dbReference>
<dbReference type="GO" id="GO:0016279">
    <property type="term" value="F:protein-lysine N-methyltransferase activity"/>
    <property type="evidence" value="ECO:0007669"/>
    <property type="project" value="RHEA"/>
</dbReference>
<dbReference type="GO" id="GO:0032259">
    <property type="term" value="P:methylation"/>
    <property type="evidence" value="ECO:0007669"/>
    <property type="project" value="UniProtKB-KW"/>
</dbReference>
<dbReference type="CDD" id="cd02440">
    <property type="entry name" value="AdoMet_MTases"/>
    <property type="match status" value="1"/>
</dbReference>
<dbReference type="Gene3D" id="3.40.50.150">
    <property type="entry name" value="Vaccinia Virus protein VP39"/>
    <property type="match status" value="1"/>
</dbReference>
<dbReference type="HAMAP" id="MF_00735">
    <property type="entry name" value="Methyltr_PrmA"/>
    <property type="match status" value="1"/>
</dbReference>
<dbReference type="InterPro" id="IPR050078">
    <property type="entry name" value="Ribosomal_L11_MeTrfase_PrmA"/>
</dbReference>
<dbReference type="InterPro" id="IPR004498">
    <property type="entry name" value="Ribosomal_PrmA_MeTrfase"/>
</dbReference>
<dbReference type="InterPro" id="IPR029063">
    <property type="entry name" value="SAM-dependent_MTases_sf"/>
</dbReference>
<dbReference type="NCBIfam" id="TIGR00406">
    <property type="entry name" value="prmA"/>
    <property type="match status" value="1"/>
</dbReference>
<dbReference type="PANTHER" id="PTHR43648">
    <property type="entry name" value="ELECTRON TRANSFER FLAVOPROTEIN BETA SUBUNIT LYSINE METHYLTRANSFERASE"/>
    <property type="match status" value="1"/>
</dbReference>
<dbReference type="PANTHER" id="PTHR43648:SF1">
    <property type="entry name" value="ELECTRON TRANSFER FLAVOPROTEIN BETA SUBUNIT LYSINE METHYLTRANSFERASE"/>
    <property type="match status" value="1"/>
</dbReference>
<dbReference type="Pfam" id="PF06325">
    <property type="entry name" value="PrmA"/>
    <property type="match status" value="1"/>
</dbReference>
<dbReference type="PIRSF" id="PIRSF000401">
    <property type="entry name" value="RPL11_MTase"/>
    <property type="match status" value="1"/>
</dbReference>
<dbReference type="SUPFAM" id="SSF53335">
    <property type="entry name" value="S-adenosyl-L-methionine-dependent methyltransferases"/>
    <property type="match status" value="1"/>
</dbReference>
<comment type="function">
    <text evidence="1">Methylates ribosomal protein L11.</text>
</comment>
<comment type="catalytic activity">
    <reaction evidence="1">
        <text>L-lysyl-[protein] + 3 S-adenosyl-L-methionine = N(6),N(6),N(6)-trimethyl-L-lysyl-[protein] + 3 S-adenosyl-L-homocysteine + 3 H(+)</text>
        <dbReference type="Rhea" id="RHEA:54192"/>
        <dbReference type="Rhea" id="RHEA-COMP:9752"/>
        <dbReference type="Rhea" id="RHEA-COMP:13826"/>
        <dbReference type="ChEBI" id="CHEBI:15378"/>
        <dbReference type="ChEBI" id="CHEBI:29969"/>
        <dbReference type="ChEBI" id="CHEBI:57856"/>
        <dbReference type="ChEBI" id="CHEBI:59789"/>
        <dbReference type="ChEBI" id="CHEBI:61961"/>
    </reaction>
</comment>
<comment type="subcellular location">
    <subcellularLocation>
        <location evidence="1">Cytoplasm</location>
    </subcellularLocation>
</comment>
<comment type="similarity">
    <text evidence="1">Belongs to the methyltransferase superfamily. PrmA family.</text>
</comment>
<reference key="1">
    <citation type="journal article" date="2011" name="J. Bacteriol.">
        <title>Genome sequence of lineage III Listeria monocytogenes strain HCC23.</title>
        <authorList>
            <person name="Steele C.L."/>
            <person name="Donaldson J.R."/>
            <person name="Paul D."/>
            <person name="Banes M.M."/>
            <person name="Arick T."/>
            <person name="Bridges S.M."/>
            <person name="Lawrence M.L."/>
        </authorList>
    </citation>
    <scope>NUCLEOTIDE SEQUENCE [LARGE SCALE GENOMIC DNA]</scope>
    <source>
        <strain>HCC23</strain>
    </source>
</reference>